<accession>A7Z5N6</accession>
<name>Y1950_BACVZ</name>
<dbReference type="EMBL" id="CP000560">
    <property type="protein sequence ID" value="ABS74312.1"/>
    <property type="molecule type" value="Genomic_DNA"/>
</dbReference>
<dbReference type="RefSeq" id="WP_007407941.1">
    <property type="nucleotide sequence ID" value="NC_009725.2"/>
</dbReference>
<dbReference type="SMR" id="A7Z5N6"/>
<dbReference type="GeneID" id="93081079"/>
<dbReference type="KEGG" id="bay:RBAM_019500"/>
<dbReference type="HOGENOM" id="CLU_177534_1_0_9"/>
<dbReference type="Proteomes" id="UP000001120">
    <property type="component" value="Chromosome"/>
</dbReference>
<dbReference type="Gene3D" id="1.10.150.260">
    <property type="entry name" value="YozE SAM-like"/>
    <property type="match status" value="1"/>
</dbReference>
<dbReference type="HAMAP" id="MF_01538">
    <property type="entry name" value="UPF0346"/>
    <property type="match status" value="1"/>
</dbReference>
<dbReference type="InterPro" id="IPR010673">
    <property type="entry name" value="UPF0346"/>
</dbReference>
<dbReference type="InterPro" id="IPR023089">
    <property type="entry name" value="YozE_SAM-like"/>
</dbReference>
<dbReference type="InterPro" id="IPR036806">
    <property type="entry name" value="YozE_SAM-like_sf"/>
</dbReference>
<dbReference type="NCBIfam" id="NF010193">
    <property type="entry name" value="PRK13672.1"/>
    <property type="match status" value="1"/>
</dbReference>
<dbReference type="Pfam" id="PF06855">
    <property type="entry name" value="YozE_SAM_like"/>
    <property type="match status" value="1"/>
</dbReference>
<dbReference type="PIRSF" id="PIRSF037262">
    <property type="entry name" value="UCP037262"/>
    <property type="match status" value="1"/>
</dbReference>
<dbReference type="SUPFAM" id="SSF140652">
    <property type="entry name" value="YozE-like"/>
    <property type="match status" value="1"/>
</dbReference>
<reference key="1">
    <citation type="journal article" date="2007" name="Nat. Biotechnol.">
        <title>Comparative analysis of the complete genome sequence of the plant growth-promoting bacterium Bacillus amyloliquefaciens FZB42.</title>
        <authorList>
            <person name="Chen X.H."/>
            <person name="Koumoutsi A."/>
            <person name="Scholz R."/>
            <person name="Eisenreich A."/>
            <person name="Schneider K."/>
            <person name="Heinemeyer I."/>
            <person name="Morgenstern B."/>
            <person name="Voss B."/>
            <person name="Hess W.R."/>
            <person name="Reva O."/>
            <person name="Junge H."/>
            <person name="Voigt B."/>
            <person name="Jungblut P.R."/>
            <person name="Vater J."/>
            <person name="Suessmuth R."/>
            <person name="Liesegang H."/>
            <person name="Strittmatter A."/>
            <person name="Gottschalk G."/>
            <person name="Borriss R."/>
        </authorList>
    </citation>
    <scope>NUCLEOTIDE SEQUENCE [LARGE SCALE GENOMIC DNA]</scope>
    <source>
        <strain>DSM 23117 / BGSC 10A6 / LMG 26770 / FZB42</strain>
    </source>
</reference>
<feature type="chain" id="PRO_1000087614" description="UPF0346 protein RBAM_019500">
    <location>
        <begin position="1"/>
        <end position="74"/>
    </location>
</feature>
<protein>
    <recommendedName>
        <fullName evidence="1">UPF0346 protein RBAM_019500</fullName>
    </recommendedName>
</protein>
<proteinExistence type="inferred from homology"/>
<comment type="similarity">
    <text evidence="1">Belongs to the UPF0346 family.</text>
</comment>
<evidence type="ECO:0000255" key="1">
    <source>
        <dbReference type="HAMAP-Rule" id="MF_01538"/>
    </source>
</evidence>
<sequence length="74" mass="8857">MKSFYHYLMKYRHPKPQDAISQFANQAYEDHGFPKTSSDYHELSSYLELSADYLETMATFDEAWEKYETEVHHA</sequence>
<gene>
    <name type="ordered locus">RBAM_019500</name>
</gene>
<organism>
    <name type="scientific">Bacillus velezensis (strain DSM 23117 / BGSC 10A6 / LMG 26770 / FZB42)</name>
    <name type="common">Bacillus amyloliquefaciens subsp. plantarum</name>
    <dbReference type="NCBI Taxonomy" id="326423"/>
    <lineage>
        <taxon>Bacteria</taxon>
        <taxon>Bacillati</taxon>
        <taxon>Bacillota</taxon>
        <taxon>Bacilli</taxon>
        <taxon>Bacillales</taxon>
        <taxon>Bacillaceae</taxon>
        <taxon>Bacillus</taxon>
        <taxon>Bacillus amyloliquefaciens group</taxon>
    </lineage>
</organism>